<evidence type="ECO:0000255" key="1">
    <source>
        <dbReference type="HAMAP-Rule" id="MF_03010"/>
    </source>
</evidence>
<evidence type="ECO:0000255" key="2">
    <source>
        <dbReference type="PROSITE-ProRule" id="PRU01185"/>
    </source>
</evidence>
<comment type="function">
    <text evidence="1">Component of the eukaryotic translation initiation factor 3 (eIF-3) complex, which is involved in protein synthesis of a specialized repertoire of mRNAs and, together with other initiation factors, stimulates binding of mRNA and methionyl-tRNAi to the 40S ribosome. The eIF-3 complex specifically targets and initiates translation of a subset of mRNAs involved in cell proliferation.</text>
</comment>
<comment type="subunit">
    <text evidence="1">Component of the eukaryotic translation initiation factor 3 (eIF-3) complex. The eIF-3 complex interacts with pix.</text>
</comment>
<comment type="subcellular location">
    <subcellularLocation>
        <location evidence="1">Cytoplasm</location>
    </subcellularLocation>
</comment>
<comment type="similarity">
    <text evidence="1">Belongs to the eIF-3 subunit K family.</text>
</comment>
<proteinExistence type="inferred from homology"/>
<name>EIF3K_DROVI</name>
<reference key="1">
    <citation type="journal article" date="2007" name="Nature">
        <title>Evolution of genes and genomes on the Drosophila phylogeny.</title>
        <authorList>
            <consortium name="Drosophila 12 genomes consortium"/>
        </authorList>
    </citation>
    <scope>NUCLEOTIDE SEQUENCE [LARGE SCALE GENOMIC DNA]</scope>
    <source>
        <strain>Tucson 15010-1051.87</strain>
    </source>
</reference>
<protein>
    <recommendedName>
        <fullName evidence="1">Eukaryotic translation initiation factor 3 subunit K</fullName>
        <shortName evidence="1">eIF3k</shortName>
    </recommendedName>
    <alternativeName>
        <fullName evidence="1">eIF-3 p25</fullName>
    </alternativeName>
</protein>
<organism>
    <name type="scientific">Drosophila virilis</name>
    <name type="common">Fruit fly</name>
    <dbReference type="NCBI Taxonomy" id="7244"/>
    <lineage>
        <taxon>Eukaryota</taxon>
        <taxon>Metazoa</taxon>
        <taxon>Ecdysozoa</taxon>
        <taxon>Arthropoda</taxon>
        <taxon>Hexapoda</taxon>
        <taxon>Insecta</taxon>
        <taxon>Pterygota</taxon>
        <taxon>Neoptera</taxon>
        <taxon>Endopterygota</taxon>
        <taxon>Diptera</taxon>
        <taxon>Brachycera</taxon>
        <taxon>Muscomorpha</taxon>
        <taxon>Ephydroidea</taxon>
        <taxon>Drosophilidae</taxon>
        <taxon>Drosophila</taxon>
    </lineage>
</organism>
<dbReference type="EMBL" id="CH940648">
    <property type="protein sequence ID" value="EDW60128.1"/>
    <property type="molecule type" value="Genomic_DNA"/>
</dbReference>
<dbReference type="SMR" id="B4LNQ8"/>
<dbReference type="FunCoup" id="B4LNQ8">
    <property type="interactions" value="1911"/>
</dbReference>
<dbReference type="STRING" id="7244.B4LNQ8"/>
<dbReference type="EnsemblMetazoa" id="FBtr0236970">
    <property type="protein sequence ID" value="FBpp0235462"/>
    <property type="gene ID" value="FBgn0208179"/>
</dbReference>
<dbReference type="EnsemblMetazoa" id="XM_002048899.3">
    <property type="protein sequence ID" value="XP_002048935.1"/>
    <property type="gene ID" value="LOC6626251"/>
</dbReference>
<dbReference type="GeneID" id="6626251"/>
<dbReference type="KEGG" id="dvi:6626251"/>
<dbReference type="CTD" id="27335"/>
<dbReference type="eggNOG" id="KOG3252">
    <property type="taxonomic scope" value="Eukaryota"/>
</dbReference>
<dbReference type="HOGENOM" id="CLU_076723_1_0_1"/>
<dbReference type="InParanoid" id="B4LNQ8"/>
<dbReference type="OMA" id="WKHQGQG"/>
<dbReference type="OrthoDB" id="337745at2759"/>
<dbReference type="PhylomeDB" id="B4LNQ8"/>
<dbReference type="Proteomes" id="UP000008792">
    <property type="component" value="Unassembled WGS sequence"/>
</dbReference>
<dbReference type="GO" id="GO:0016282">
    <property type="term" value="C:eukaryotic 43S preinitiation complex"/>
    <property type="evidence" value="ECO:0007669"/>
    <property type="project" value="UniProtKB-UniRule"/>
</dbReference>
<dbReference type="GO" id="GO:0033290">
    <property type="term" value="C:eukaryotic 48S preinitiation complex"/>
    <property type="evidence" value="ECO:0007669"/>
    <property type="project" value="UniProtKB-UniRule"/>
</dbReference>
<dbReference type="GO" id="GO:0005852">
    <property type="term" value="C:eukaryotic translation initiation factor 3 complex"/>
    <property type="evidence" value="ECO:0007669"/>
    <property type="project" value="UniProtKB-UniRule"/>
</dbReference>
<dbReference type="GO" id="GO:0043022">
    <property type="term" value="F:ribosome binding"/>
    <property type="evidence" value="ECO:0007669"/>
    <property type="project" value="InterPro"/>
</dbReference>
<dbReference type="GO" id="GO:0003723">
    <property type="term" value="F:RNA binding"/>
    <property type="evidence" value="ECO:0007669"/>
    <property type="project" value="UniProtKB-UniRule"/>
</dbReference>
<dbReference type="GO" id="GO:0003743">
    <property type="term" value="F:translation initiation factor activity"/>
    <property type="evidence" value="ECO:0007669"/>
    <property type="project" value="UniProtKB-UniRule"/>
</dbReference>
<dbReference type="GO" id="GO:0001732">
    <property type="term" value="P:formation of cytoplasmic translation initiation complex"/>
    <property type="evidence" value="ECO:0007669"/>
    <property type="project" value="UniProtKB-UniRule"/>
</dbReference>
<dbReference type="GO" id="GO:0006446">
    <property type="term" value="P:regulation of translational initiation"/>
    <property type="evidence" value="ECO:0007669"/>
    <property type="project" value="InterPro"/>
</dbReference>
<dbReference type="FunFam" id="1.10.10.10:FF:000212">
    <property type="entry name" value="Eukaryotic translation initiation factor 3 subunit K"/>
    <property type="match status" value="1"/>
</dbReference>
<dbReference type="FunFam" id="1.25.40.250:FF:000001">
    <property type="entry name" value="Eukaryotic translation initiation factor 3 subunit K"/>
    <property type="match status" value="1"/>
</dbReference>
<dbReference type="Gene3D" id="1.25.40.250">
    <property type="entry name" value="ARM repeat, domain 1"/>
    <property type="match status" value="1"/>
</dbReference>
<dbReference type="Gene3D" id="1.10.10.10">
    <property type="entry name" value="Winged helix-like DNA-binding domain superfamily/Winged helix DNA-binding domain"/>
    <property type="match status" value="1"/>
</dbReference>
<dbReference type="HAMAP" id="MF_03010">
    <property type="entry name" value="eIF3k"/>
    <property type="match status" value="1"/>
</dbReference>
<dbReference type="InterPro" id="IPR016024">
    <property type="entry name" value="ARM-type_fold"/>
</dbReference>
<dbReference type="InterPro" id="IPR033464">
    <property type="entry name" value="CSN8_PSD8_EIF3K"/>
</dbReference>
<dbReference type="InterPro" id="IPR009374">
    <property type="entry name" value="eIF3k"/>
</dbReference>
<dbReference type="InterPro" id="IPR000717">
    <property type="entry name" value="PCI_dom"/>
</dbReference>
<dbReference type="InterPro" id="IPR016020">
    <property type="entry name" value="Transl_init_fac_sub12_N_euk"/>
</dbReference>
<dbReference type="InterPro" id="IPR036388">
    <property type="entry name" value="WH-like_DNA-bd_sf"/>
</dbReference>
<dbReference type="InterPro" id="IPR036390">
    <property type="entry name" value="WH_DNA-bd_sf"/>
</dbReference>
<dbReference type="PANTHER" id="PTHR13022">
    <property type="entry name" value="EUKARYOTIC TRANSLATION INITIATION FACTOR 3 SUBUNIT 11"/>
    <property type="match status" value="1"/>
</dbReference>
<dbReference type="PANTHER" id="PTHR13022:SF0">
    <property type="entry name" value="EUKARYOTIC TRANSLATION INITIATION FACTOR 3 SUBUNIT K"/>
    <property type="match status" value="1"/>
</dbReference>
<dbReference type="Pfam" id="PF10075">
    <property type="entry name" value="CSN8_PSD8_EIF3K"/>
    <property type="match status" value="1"/>
</dbReference>
<dbReference type="SUPFAM" id="SSF48371">
    <property type="entry name" value="ARM repeat"/>
    <property type="match status" value="1"/>
</dbReference>
<dbReference type="SUPFAM" id="SSF46785">
    <property type="entry name" value="Winged helix' DNA-binding domain"/>
    <property type="match status" value="1"/>
</dbReference>
<dbReference type="PROSITE" id="PS50250">
    <property type="entry name" value="PCI"/>
    <property type="match status" value="1"/>
</dbReference>
<sequence>MAHLVKMENGQSQTIQEMLGCIERYNPDHLKILESYVQDQAKNNTYDLEANLAVLKLYQFNPHMLNFDITYTILLKCLTNLPHTDFVMAKCLLLPQQMKDENVQTIIDLADILERADFTLFWQRAEVNRTMFRHITGFHDSIRKFVSHVVGTTFQTIKKDLLKELLGGIEDSTLENWIKRNGWKHQGHDLVVVATQDDKIKTKNITEKIEFENVGALMAQCI</sequence>
<feature type="chain" id="PRO_0000365047" description="Eukaryotic translation initiation factor 3 subunit K">
    <location>
        <begin position="1"/>
        <end position="222"/>
    </location>
</feature>
<feature type="domain" description="PCI" evidence="2">
    <location>
        <begin position="46"/>
        <end position="208"/>
    </location>
</feature>
<gene>
    <name type="ORF">GJ21045</name>
</gene>
<accession>B4LNQ8</accession>
<keyword id="KW-0963">Cytoplasm</keyword>
<keyword id="KW-0396">Initiation factor</keyword>
<keyword id="KW-0648">Protein biosynthesis</keyword>
<keyword id="KW-1185">Reference proteome</keyword>